<evidence type="ECO:0000250" key="1"/>
<evidence type="ECO:0000255" key="2">
    <source>
        <dbReference type="HAMAP-Rule" id="MF_00403"/>
    </source>
</evidence>
<evidence type="ECO:0000256" key="3">
    <source>
        <dbReference type="SAM" id="MobiDB-lite"/>
    </source>
</evidence>
<evidence type="ECO:0000305" key="4"/>
<organism>
    <name type="scientific">Tropheryma whipplei (strain Twist)</name>
    <name type="common">Whipple's bacillus</name>
    <dbReference type="NCBI Taxonomy" id="203267"/>
    <lineage>
        <taxon>Bacteria</taxon>
        <taxon>Bacillati</taxon>
        <taxon>Actinomycetota</taxon>
        <taxon>Actinomycetes</taxon>
        <taxon>Micrococcales</taxon>
        <taxon>Tropherymataceae</taxon>
        <taxon>Tropheryma</taxon>
    </lineage>
</organism>
<feature type="chain" id="PRO_0000146348" description="Small ribosomal subunit protein uS12">
    <location>
        <begin position="1"/>
        <end position="124"/>
    </location>
</feature>
<feature type="region of interest" description="Disordered" evidence="3">
    <location>
        <begin position="1"/>
        <end position="42"/>
    </location>
</feature>
<feature type="compositionally biased region" description="Basic residues" evidence="3">
    <location>
        <begin position="9"/>
        <end position="18"/>
    </location>
</feature>
<feature type="compositionally biased region" description="Polar residues" evidence="3">
    <location>
        <begin position="27"/>
        <end position="42"/>
    </location>
</feature>
<feature type="modified residue" description="3-methylthioaspartic acid" evidence="1">
    <location>
        <position position="89"/>
    </location>
</feature>
<proteinExistence type="inferred from homology"/>
<protein>
    <recommendedName>
        <fullName evidence="2">Small ribosomal subunit protein uS12</fullName>
    </recommendedName>
    <alternativeName>
        <fullName evidence="4">30S ribosomal protein S12</fullName>
    </alternativeName>
</protein>
<keyword id="KW-0488">Methylation</keyword>
<keyword id="KW-1185">Reference proteome</keyword>
<keyword id="KW-0687">Ribonucleoprotein</keyword>
<keyword id="KW-0689">Ribosomal protein</keyword>
<keyword id="KW-0694">RNA-binding</keyword>
<keyword id="KW-0699">rRNA-binding</keyword>
<keyword id="KW-0820">tRNA-binding</keyword>
<comment type="function">
    <text evidence="2">With S4 and S5 plays an important role in translational accuracy.</text>
</comment>
<comment type="function">
    <text evidence="2">Interacts with and stabilizes bases of the 16S rRNA that are involved in tRNA selection in the A site and with the mRNA backbone. Located at the interface of the 30S and 50S subunits, it traverses the body of the 30S subunit contacting proteins on the other side and probably holding the rRNA structure together. The combined cluster of proteins S8, S12 and S17 appears to hold together the shoulder and platform of the 30S subunit.</text>
</comment>
<comment type="subunit">
    <text evidence="2">Part of the 30S ribosomal subunit. Contacts proteins S8 and S17. May interact with IF1 in the 30S initiation complex.</text>
</comment>
<comment type="similarity">
    <text evidence="2">Belongs to the universal ribosomal protein uS12 family.</text>
</comment>
<reference key="1">
    <citation type="journal article" date="2003" name="Genome Res.">
        <title>Tropheryma whipplei twist: a human pathogenic Actinobacteria with a reduced genome.</title>
        <authorList>
            <person name="Raoult D."/>
            <person name="Ogata H."/>
            <person name="Audic S."/>
            <person name="Robert C."/>
            <person name="Suhre K."/>
            <person name="Drancourt M."/>
            <person name="Claverie J.-M."/>
        </authorList>
    </citation>
    <scope>NUCLEOTIDE SEQUENCE [LARGE SCALE GENOMIC DNA]</scope>
    <source>
        <strain>Twist</strain>
    </source>
</reference>
<gene>
    <name evidence="2" type="primary">rpsL</name>
    <name type="ordered locus">TWT_677</name>
</gene>
<sequence length="124" mass="13840">MPTIQQLVRKGRRPKVNKTKSPALRGNPQQRGVCSRVYTTTPKKPNSALRKVARVKLSNGTEVTVYIPGEGHNLQEHSIVLVRGGRVKDLPGVRYKVVRGALDAQAVKDRKQARSRYGAKMEKK</sequence>
<accession>Q83FN9</accession>
<dbReference type="EMBL" id="AE014184">
    <property type="protein sequence ID" value="AAO44774.1"/>
    <property type="molecule type" value="Genomic_DNA"/>
</dbReference>
<dbReference type="RefSeq" id="WP_011096633.1">
    <property type="nucleotide sequence ID" value="NC_004572.3"/>
</dbReference>
<dbReference type="SMR" id="Q83FN9"/>
<dbReference type="STRING" id="203267.TWT_677"/>
<dbReference type="GeneID" id="67388472"/>
<dbReference type="KEGG" id="twh:TWT_677"/>
<dbReference type="eggNOG" id="COG0048">
    <property type="taxonomic scope" value="Bacteria"/>
</dbReference>
<dbReference type="HOGENOM" id="CLU_104295_1_2_11"/>
<dbReference type="OrthoDB" id="9802366at2"/>
<dbReference type="Proteomes" id="UP000002200">
    <property type="component" value="Chromosome"/>
</dbReference>
<dbReference type="GO" id="GO:0015935">
    <property type="term" value="C:small ribosomal subunit"/>
    <property type="evidence" value="ECO:0007669"/>
    <property type="project" value="InterPro"/>
</dbReference>
<dbReference type="GO" id="GO:0019843">
    <property type="term" value="F:rRNA binding"/>
    <property type="evidence" value="ECO:0007669"/>
    <property type="project" value="UniProtKB-UniRule"/>
</dbReference>
<dbReference type="GO" id="GO:0003735">
    <property type="term" value="F:structural constituent of ribosome"/>
    <property type="evidence" value="ECO:0007669"/>
    <property type="project" value="InterPro"/>
</dbReference>
<dbReference type="GO" id="GO:0000049">
    <property type="term" value="F:tRNA binding"/>
    <property type="evidence" value="ECO:0007669"/>
    <property type="project" value="UniProtKB-UniRule"/>
</dbReference>
<dbReference type="GO" id="GO:0006412">
    <property type="term" value="P:translation"/>
    <property type="evidence" value="ECO:0007669"/>
    <property type="project" value="UniProtKB-UniRule"/>
</dbReference>
<dbReference type="CDD" id="cd03368">
    <property type="entry name" value="Ribosomal_S12"/>
    <property type="match status" value="1"/>
</dbReference>
<dbReference type="FunFam" id="2.40.50.140:FF:000001">
    <property type="entry name" value="30S ribosomal protein S12"/>
    <property type="match status" value="1"/>
</dbReference>
<dbReference type="Gene3D" id="2.40.50.140">
    <property type="entry name" value="Nucleic acid-binding proteins"/>
    <property type="match status" value="1"/>
</dbReference>
<dbReference type="HAMAP" id="MF_00403_B">
    <property type="entry name" value="Ribosomal_uS12_B"/>
    <property type="match status" value="1"/>
</dbReference>
<dbReference type="InterPro" id="IPR012340">
    <property type="entry name" value="NA-bd_OB-fold"/>
</dbReference>
<dbReference type="InterPro" id="IPR006032">
    <property type="entry name" value="Ribosomal_uS12"/>
</dbReference>
<dbReference type="InterPro" id="IPR005679">
    <property type="entry name" value="Ribosomal_uS12_bac"/>
</dbReference>
<dbReference type="NCBIfam" id="TIGR00981">
    <property type="entry name" value="rpsL_bact"/>
    <property type="match status" value="1"/>
</dbReference>
<dbReference type="PANTHER" id="PTHR11652">
    <property type="entry name" value="30S RIBOSOMAL PROTEIN S12 FAMILY MEMBER"/>
    <property type="match status" value="1"/>
</dbReference>
<dbReference type="Pfam" id="PF00164">
    <property type="entry name" value="Ribosom_S12_S23"/>
    <property type="match status" value="1"/>
</dbReference>
<dbReference type="PIRSF" id="PIRSF002133">
    <property type="entry name" value="Ribosomal_S12/S23"/>
    <property type="match status" value="1"/>
</dbReference>
<dbReference type="PRINTS" id="PR01034">
    <property type="entry name" value="RIBOSOMALS12"/>
</dbReference>
<dbReference type="SUPFAM" id="SSF50249">
    <property type="entry name" value="Nucleic acid-binding proteins"/>
    <property type="match status" value="1"/>
</dbReference>
<dbReference type="PROSITE" id="PS00055">
    <property type="entry name" value="RIBOSOMAL_S12"/>
    <property type="match status" value="1"/>
</dbReference>
<name>RS12_TROWT</name>